<evidence type="ECO:0000250" key="1"/>
<evidence type="ECO:0000255" key="2">
    <source>
        <dbReference type="HAMAP-Rule" id="MF_00103"/>
    </source>
</evidence>
<accession>A8GLE2</accession>
<proteinExistence type="inferred from homology"/>
<comment type="function">
    <text evidence="2">Involved in base excision repair of DNA damaged by oxidation or by mutagenic agents. Acts as a DNA glycosylase that recognizes and removes damaged bases. Has a preference for oxidized purines, such as 7,8-dihydro-8-oxoguanine (8-oxoG). Has AP (apurinic/apyrimidinic) lyase activity and introduces nicks in the DNA strand. Cleaves the DNA backbone by beta-delta elimination to generate a single-strand break at the site of the removed base with both 3'- and 5'-phosphates.</text>
</comment>
<comment type="catalytic activity">
    <reaction evidence="2">
        <text>Hydrolysis of DNA containing ring-opened 7-methylguanine residues, releasing 2,6-diamino-4-hydroxy-5-(N-methyl)formamidopyrimidine.</text>
        <dbReference type="EC" id="3.2.2.23"/>
    </reaction>
</comment>
<comment type="catalytic activity">
    <reaction evidence="2">
        <text>2'-deoxyribonucleotide-(2'-deoxyribose 5'-phosphate)-2'-deoxyribonucleotide-DNA = a 3'-end 2'-deoxyribonucleotide-(2,3-dehydro-2,3-deoxyribose 5'-phosphate)-DNA + a 5'-end 5'-phospho-2'-deoxyribonucleoside-DNA + H(+)</text>
        <dbReference type="Rhea" id="RHEA:66592"/>
        <dbReference type="Rhea" id="RHEA-COMP:13180"/>
        <dbReference type="Rhea" id="RHEA-COMP:16897"/>
        <dbReference type="Rhea" id="RHEA-COMP:17067"/>
        <dbReference type="ChEBI" id="CHEBI:15378"/>
        <dbReference type="ChEBI" id="CHEBI:136412"/>
        <dbReference type="ChEBI" id="CHEBI:157695"/>
        <dbReference type="ChEBI" id="CHEBI:167181"/>
        <dbReference type="EC" id="4.2.99.18"/>
    </reaction>
</comment>
<comment type="cofactor">
    <cofactor evidence="2">
        <name>Zn(2+)</name>
        <dbReference type="ChEBI" id="CHEBI:29105"/>
    </cofactor>
    <text evidence="2">Binds 1 zinc ion per subunit.</text>
</comment>
<comment type="subunit">
    <text evidence="2">Monomer.</text>
</comment>
<comment type="similarity">
    <text evidence="2">Belongs to the FPG family.</text>
</comment>
<feature type="initiator methionine" description="Removed" evidence="1">
    <location>
        <position position="1"/>
    </location>
</feature>
<feature type="chain" id="PRO_1000057696" description="Formamidopyrimidine-DNA glycosylase">
    <location>
        <begin position="2"/>
        <end position="269"/>
    </location>
</feature>
<feature type="zinc finger region" description="FPG-type" evidence="2">
    <location>
        <begin position="235"/>
        <end position="269"/>
    </location>
</feature>
<feature type="active site" description="Schiff-base intermediate with DNA" evidence="2">
    <location>
        <position position="2"/>
    </location>
</feature>
<feature type="active site" description="Proton donor" evidence="2">
    <location>
        <position position="3"/>
    </location>
</feature>
<feature type="active site" description="Proton donor; for beta-elimination activity" evidence="2">
    <location>
        <position position="57"/>
    </location>
</feature>
<feature type="active site" description="Proton donor; for delta-elimination activity" evidence="2">
    <location>
        <position position="259"/>
    </location>
</feature>
<feature type="binding site" evidence="2">
    <location>
        <position position="90"/>
    </location>
    <ligand>
        <name>DNA</name>
        <dbReference type="ChEBI" id="CHEBI:16991"/>
    </ligand>
</feature>
<feature type="binding site" evidence="2">
    <location>
        <position position="109"/>
    </location>
    <ligand>
        <name>DNA</name>
        <dbReference type="ChEBI" id="CHEBI:16991"/>
    </ligand>
</feature>
<feature type="binding site" evidence="2">
    <location>
        <position position="150"/>
    </location>
    <ligand>
        <name>DNA</name>
        <dbReference type="ChEBI" id="CHEBI:16991"/>
    </ligand>
</feature>
<protein>
    <recommendedName>
        <fullName evidence="2">Formamidopyrimidine-DNA glycosylase</fullName>
        <shortName evidence="2">Fapy-DNA glycosylase</shortName>
        <ecNumber evidence="2">3.2.2.23</ecNumber>
    </recommendedName>
    <alternativeName>
        <fullName evidence="2">DNA-(apurinic or apyrimidinic site) lyase MutM</fullName>
        <shortName evidence="2">AP lyase MutM</shortName>
        <ecNumber evidence="2">4.2.99.18</ecNumber>
    </alternativeName>
</protein>
<organism>
    <name type="scientific">Serratia proteamaculans (strain 568)</name>
    <dbReference type="NCBI Taxonomy" id="399741"/>
    <lineage>
        <taxon>Bacteria</taxon>
        <taxon>Pseudomonadati</taxon>
        <taxon>Pseudomonadota</taxon>
        <taxon>Gammaproteobacteria</taxon>
        <taxon>Enterobacterales</taxon>
        <taxon>Yersiniaceae</taxon>
        <taxon>Serratia</taxon>
    </lineage>
</organism>
<reference key="1">
    <citation type="submission" date="2007-09" db="EMBL/GenBank/DDBJ databases">
        <title>Complete sequence of chromosome of Serratia proteamaculans 568.</title>
        <authorList>
            <consortium name="US DOE Joint Genome Institute"/>
            <person name="Copeland A."/>
            <person name="Lucas S."/>
            <person name="Lapidus A."/>
            <person name="Barry K."/>
            <person name="Glavina del Rio T."/>
            <person name="Dalin E."/>
            <person name="Tice H."/>
            <person name="Pitluck S."/>
            <person name="Chain P."/>
            <person name="Malfatti S."/>
            <person name="Shin M."/>
            <person name="Vergez L."/>
            <person name="Schmutz J."/>
            <person name="Larimer F."/>
            <person name="Land M."/>
            <person name="Hauser L."/>
            <person name="Kyrpides N."/>
            <person name="Kim E."/>
            <person name="Taghavi S."/>
            <person name="Newman L."/>
            <person name="Vangronsveld J."/>
            <person name="van der Lelie D."/>
            <person name="Richardson P."/>
        </authorList>
    </citation>
    <scope>NUCLEOTIDE SEQUENCE [LARGE SCALE GENOMIC DNA]</scope>
    <source>
        <strain>568</strain>
    </source>
</reference>
<dbReference type="EC" id="3.2.2.23" evidence="2"/>
<dbReference type="EC" id="4.2.99.18" evidence="2"/>
<dbReference type="EMBL" id="CP000826">
    <property type="protein sequence ID" value="ABV43932.1"/>
    <property type="molecule type" value="Genomic_DNA"/>
</dbReference>
<dbReference type="SMR" id="A8GLE2"/>
<dbReference type="STRING" id="399741.Spro_4839"/>
<dbReference type="KEGG" id="spe:Spro_4839"/>
<dbReference type="eggNOG" id="COG0266">
    <property type="taxonomic scope" value="Bacteria"/>
</dbReference>
<dbReference type="HOGENOM" id="CLU_038423_1_1_6"/>
<dbReference type="OrthoDB" id="9800855at2"/>
<dbReference type="GO" id="GO:0034039">
    <property type="term" value="F:8-oxo-7,8-dihydroguanine DNA N-glycosylase activity"/>
    <property type="evidence" value="ECO:0007669"/>
    <property type="project" value="TreeGrafter"/>
</dbReference>
<dbReference type="GO" id="GO:0140078">
    <property type="term" value="F:class I DNA-(apurinic or apyrimidinic site) endonuclease activity"/>
    <property type="evidence" value="ECO:0007669"/>
    <property type="project" value="UniProtKB-EC"/>
</dbReference>
<dbReference type="GO" id="GO:0003684">
    <property type="term" value="F:damaged DNA binding"/>
    <property type="evidence" value="ECO:0007669"/>
    <property type="project" value="InterPro"/>
</dbReference>
<dbReference type="GO" id="GO:0008270">
    <property type="term" value="F:zinc ion binding"/>
    <property type="evidence" value="ECO:0007669"/>
    <property type="project" value="UniProtKB-UniRule"/>
</dbReference>
<dbReference type="GO" id="GO:0006284">
    <property type="term" value="P:base-excision repair"/>
    <property type="evidence" value="ECO:0007669"/>
    <property type="project" value="InterPro"/>
</dbReference>
<dbReference type="CDD" id="cd08966">
    <property type="entry name" value="EcFpg-like_N"/>
    <property type="match status" value="1"/>
</dbReference>
<dbReference type="FunFam" id="1.10.8.50:FF:000003">
    <property type="entry name" value="Formamidopyrimidine-DNA glycosylase"/>
    <property type="match status" value="1"/>
</dbReference>
<dbReference type="FunFam" id="3.20.190.10:FF:000001">
    <property type="entry name" value="Formamidopyrimidine-DNA glycosylase"/>
    <property type="match status" value="1"/>
</dbReference>
<dbReference type="Gene3D" id="1.10.8.50">
    <property type="match status" value="1"/>
</dbReference>
<dbReference type="Gene3D" id="3.20.190.10">
    <property type="entry name" value="MutM-like, N-terminal"/>
    <property type="match status" value="1"/>
</dbReference>
<dbReference type="HAMAP" id="MF_00103">
    <property type="entry name" value="Fapy_DNA_glycosyl"/>
    <property type="match status" value="1"/>
</dbReference>
<dbReference type="InterPro" id="IPR015886">
    <property type="entry name" value="DNA_glyclase/AP_lyase_DNA-bd"/>
</dbReference>
<dbReference type="InterPro" id="IPR015887">
    <property type="entry name" value="DNA_glyclase_Znf_dom_DNA_BS"/>
</dbReference>
<dbReference type="InterPro" id="IPR020629">
    <property type="entry name" value="Formamido-pyr_DNA_Glyclase"/>
</dbReference>
<dbReference type="InterPro" id="IPR012319">
    <property type="entry name" value="FPG_cat"/>
</dbReference>
<dbReference type="InterPro" id="IPR035937">
    <property type="entry name" value="MutM-like_N-ter"/>
</dbReference>
<dbReference type="InterPro" id="IPR010979">
    <property type="entry name" value="Ribosomal_uS13-like_H2TH"/>
</dbReference>
<dbReference type="InterPro" id="IPR000214">
    <property type="entry name" value="Znf_DNA_glyclase/AP_lyase"/>
</dbReference>
<dbReference type="InterPro" id="IPR010663">
    <property type="entry name" value="Znf_FPG/IleRS"/>
</dbReference>
<dbReference type="NCBIfam" id="TIGR00577">
    <property type="entry name" value="fpg"/>
    <property type="match status" value="1"/>
</dbReference>
<dbReference type="NCBIfam" id="NF002211">
    <property type="entry name" value="PRK01103.1"/>
    <property type="match status" value="1"/>
</dbReference>
<dbReference type="PANTHER" id="PTHR22993">
    <property type="entry name" value="FORMAMIDOPYRIMIDINE-DNA GLYCOSYLASE"/>
    <property type="match status" value="1"/>
</dbReference>
<dbReference type="PANTHER" id="PTHR22993:SF9">
    <property type="entry name" value="FORMAMIDOPYRIMIDINE-DNA GLYCOSYLASE"/>
    <property type="match status" value="1"/>
</dbReference>
<dbReference type="Pfam" id="PF01149">
    <property type="entry name" value="Fapy_DNA_glyco"/>
    <property type="match status" value="1"/>
</dbReference>
<dbReference type="Pfam" id="PF06831">
    <property type="entry name" value="H2TH"/>
    <property type="match status" value="1"/>
</dbReference>
<dbReference type="Pfam" id="PF06827">
    <property type="entry name" value="zf-FPG_IleRS"/>
    <property type="match status" value="1"/>
</dbReference>
<dbReference type="SMART" id="SM00898">
    <property type="entry name" value="Fapy_DNA_glyco"/>
    <property type="match status" value="1"/>
</dbReference>
<dbReference type="SMART" id="SM01232">
    <property type="entry name" value="H2TH"/>
    <property type="match status" value="1"/>
</dbReference>
<dbReference type="SUPFAM" id="SSF57716">
    <property type="entry name" value="Glucocorticoid receptor-like (DNA-binding domain)"/>
    <property type="match status" value="1"/>
</dbReference>
<dbReference type="SUPFAM" id="SSF81624">
    <property type="entry name" value="N-terminal domain of MutM-like DNA repair proteins"/>
    <property type="match status" value="1"/>
</dbReference>
<dbReference type="SUPFAM" id="SSF46946">
    <property type="entry name" value="S13-like H2TH domain"/>
    <property type="match status" value="1"/>
</dbReference>
<dbReference type="PROSITE" id="PS51068">
    <property type="entry name" value="FPG_CAT"/>
    <property type="match status" value="1"/>
</dbReference>
<dbReference type="PROSITE" id="PS01242">
    <property type="entry name" value="ZF_FPG_1"/>
    <property type="match status" value="1"/>
</dbReference>
<dbReference type="PROSITE" id="PS51066">
    <property type="entry name" value="ZF_FPG_2"/>
    <property type="match status" value="1"/>
</dbReference>
<gene>
    <name evidence="2" type="primary">mutM</name>
    <name evidence="2" type="synonym">fpg</name>
    <name type="ordered locus">Spro_4839</name>
</gene>
<name>FPG_SERP5</name>
<sequence length="269" mass="29881">MPELPEVETSRRGIEPYLVGHSIQYAVVRNARLRWPVSEQILALSDQPVLSVQRRAKYLLIELASGWIIVHLGMSGSLRMLAEETEAGKHDHVDLVISNGMTLRYTDPRRFGAWLWCDDLATSNVLAHLGPEPLSEAFTGAYLYEKSRNKRTLIKPWLMDNKLVVGVGNIYASESLFTAGILPDRPAGSLSKVEAEVLVATIKAVLLRSIEQGGTTLRDFLQSDGKPGYFAQELQVYGRAGEPCRACGTPIESAKHGQRSTFFCPRCQR</sequence>
<keyword id="KW-0227">DNA damage</keyword>
<keyword id="KW-0234">DNA repair</keyword>
<keyword id="KW-0238">DNA-binding</keyword>
<keyword id="KW-0326">Glycosidase</keyword>
<keyword id="KW-0378">Hydrolase</keyword>
<keyword id="KW-0456">Lyase</keyword>
<keyword id="KW-0479">Metal-binding</keyword>
<keyword id="KW-0511">Multifunctional enzyme</keyword>
<keyword id="KW-0862">Zinc</keyword>
<keyword id="KW-0863">Zinc-finger</keyword>